<protein>
    <recommendedName>
        <fullName evidence="7">Trace amine-associated receptor 2</fullName>
        <shortName>TaR-2</shortName>
        <shortName evidence="7">Trace amine receptor 2</shortName>
        <shortName>mTaar2</shortName>
    </recommendedName>
    <alternativeName>
        <fullName>G-protein coupled receptor 58</fullName>
    </alternativeName>
</protein>
<gene>
    <name evidence="8 9" type="primary">Taar2</name>
    <name evidence="9" type="synonym">Gm225</name>
    <name type="synonym">Gpr58</name>
</gene>
<feature type="chain" id="PRO_0000070147" description="Trace amine-associated receptor 2">
    <location>
        <begin position="1"/>
        <end position="339"/>
    </location>
</feature>
<feature type="topological domain" description="Extracellular" evidence="2">
    <location>
        <begin position="1"/>
        <end position="36"/>
    </location>
</feature>
<feature type="transmembrane region" description="Helical; Name=1" evidence="2">
    <location>
        <begin position="37"/>
        <end position="57"/>
    </location>
</feature>
<feature type="topological domain" description="Cytoplasmic" evidence="2">
    <location>
        <begin position="58"/>
        <end position="67"/>
    </location>
</feature>
<feature type="transmembrane region" description="Helical; Name=2" evidence="2">
    <location>
        <begin position="68"/>
        <end position="88"/>
    </location>
</feature>
<feature type="topological domain" description="Extracellular" evidence="2">
    <location>
        <begin position="89"/>
        <end position="106"/>
    </location>
</feature>
<feature type="transmembrane region" description="Helical; Name=3" evidence="2">
    <location>
        <begin position="107"/>
        <end position="127"/>
    </location>
</feature>
<feature type="topological domain" description="Cytoplasmic" evidence="2">
    <location>
        <begin position="128"/>
        <end position="150"/>
    </location>
</feature>
<feature type="transmembrane region" description="Helical; Name=4" evidence="2">
    <location>
        <begin position="151"/>
        <end position="171"/>
    </location>
</feature>
<feature type="topological domain" description="Extracellular" evidence="2">
    <location>
        <begin position="172"/>
        <end position="195"/>
    </location>
</feature>
<feature type="transmembrane region" description="Helical; Name=5" evidence="2">
    <location>
        <begin position="196"/>
        <end position="216"/>
    </location>
</feature>
<feature type="topological domain" description="Cytoplasmic" evidence="2">
    <location>
        <begin position="217"/>
        <end position="251"/>
    </location>
</feature>
<feature type="transmembrane region" description="Helical; Name=6" evidence="2">
    <location>
        <begin position="252"/>
        <end position="272"/>
    </location>
</feature>
<feature type="topological domain" description="Extracellular" evidence="2">
    <location>
        <begin position="273"/>
        <end position="287"/>
    </location>
</feature>
<feature type="transmembrane region" description="Helical; Name=7" evidence="2">
    <location>
        <begin position="288"/>
        <end position="310"/>
    </location>
</feature>
<feature type="topological domain" description="Cytoplasmic" evidence="2">
    <location>
        <begin position="311"/>
        <end position="339"/>
    </location>
</feature>
<feature type="glycosylation site" description="N-linked (GlcNAc...) asparagine" evidence="2">
    <location>
        <position position="18"/>
    </location>
</feature>
<feature type="glycosylation site" description="N-linked (GlcNAc...) asparagine" evidence="2">
    <location>
        <position position="277"/>
    </location>
</feature>
<feature type="disulfide bond" evidence="1">
    <location>
        <begin position="21"/>
        <end position="185"/>
    </location>
</feature>
<feature type="disulfide bond" evidence="3">
    <location>
        <begin position="104"/>
        <end position="189"/>
    </location>
</feature>
<name>TAAR2_MOUSE</name>
<evidence type="ECO:0000250" key="1">
    <source>
        <dbReference type="UniProtKB" id="Q5QD04"/>
    </source>
</evidence>
<evidence type="ECO:0000255" key="2"/>
<evidence type="ECO:0000255" key="3">
    <source>
        <dbReference type="PROSITE-ProRule" id="PRU00521"/>
    </source>
</evidence>
<evidence type="ECO:0000269" key="4">
    <source>
    </source>
</evidence>
<evidence type="ECO:0000269" key="5">
    <source>
    </source>
</evidence>
<evidence type="ECO:0000269" key="6">
    <source>
    </source>
</evidence>
<evidence type="ECO:0000303" key="7">
    <source>
    </source>
</evidence>
<evidence type="ECO:0000303" key="8">
    <source>
    </source>
</evidence>
<evidence type="ECO:0000312" key="9">
    <source>
        <dbReference type="MGI" id="MGI:2685071"/>
    </source>
</evidence>
<dbReference type="EMBL" id="AY702326">
    <property type="protein sequence ID" value="AAV70136.1"/>
    <property type="molecule type" value="mRNA"/>
</dbReference>
<dbReference type="EMBL" id="BC139118">
    <property type="protein sequence ID" value="AAI39119.1"/>
    <property type="molecule type" value="mRNA"/>
</dbReference>
<dbReference type="EMBL" id="BC145814">
    <property type="protein sequence ID" value="AAI45815.1"/>
    <property type="molecule type" value="mRNA"/>
</dbReference>
<dbReference type="EMBL" id="AY255589">
    <property type="protein sequence ID" value="AAO85101.1"/>
    <property type="molecule type" value="mRNA"/>
</dbReference>
<dbReference type="CCDS" id="CCDS35869.1"/>
<dbReference type="RefSeq" id="NP_001007267.1">
    <property type="nucleotide sequence ID" value="NM_001007266.1"/>
</dbReference>
<dbReference type="SMR" id="Q5QD17"/>
<dbReference type="FunCoup" id="Q5QD17">
    <property type="interactions" value="938"/>
</dbReference>
<dbReference type="STRING" id="10090.ENSMUSP00000078137"/>
<dbReference type="GlyCosmos" id="Q5QD17">
    <property type="glycosylation" value="2 sites, No reported glycans"/>
</dbReference>
<dbReference type="GlyGen" id="Q5QD17">
    <property type="glycosylation" value="2 sites"/>
</dbReference>
<dbReference type="iPTMnet" id="Q5QD17"/>
<dbReference type="PhosphoSitePlus" id="Q5QD17"/>
<dbReference type="PaxDb" id="10090-ENSMUSP00000078137"/>
<dbReference type="Antibodypedia" id="19711">
    <property type="antibodies" value="99 antibodies from 24 providers"/>
</dbReference>
<dbReference type="DNASU" id="209512"/>
<dbReference type="Ensembl" id="ENSMUST00000079134.5">
    <property type="protein sequence ID" value="ENSMUSP00000078137.5"/>
    <property type="gene ID" value="ENSMUSG00000059763.5"/>
</dbReference>
<dbReference type="GeneID" id="209512"/>
<dbReference type="KEGG" id="mmu:209512"/>
<dbReference type="UCSC" id="uc007eqe.1">
    <property type="organism name" value="mouse"/>
</dbReference>
<dbReference type="AGR" id="MGI:2685071"/>
<dbReference type="CTD" id="9287"/>
<dbReference type="MGI" id="MGI:2685071">
    <property type="gene designation" value="Taar2"/>
</dbReference>
<dbReference type="VEuPathDB" id="HostDB:ENSMUSG00000059763"/>
<dbReference type="eggNOG" id="KOG3656">
    <property type="taxonomic scope" value="Eukaryota"/>
</dbReference>
<dbReference type="GeneTree" id="ENSGT00940000161475"/>
<dbReference type="HOGENOM" id="CLU_009579_11_0_1"/>
<dbReference type="InParanoid" id="Q5QD17"/>
<dbReference type="OMA" id="NCWYFGM"/>
<dbReference type="OrthoDB" id="10042731at2759"/>
<dbReference type="PhylomeDB" id="Q5QD17"/>
<dbReference type="TreeFam" id="TF343107"/>
<dbReference type="Reactome" id="R-MMU-375280">
    <property type="pathway name" value="Amine ligand-binding receptors"/>
</dbReference>
<dbReference type="Reactome" id="R-MMU-418555">
    <property type="pathway name" value="G alpha (s) signalling events"/>
</dbReference>
<dbReference type="BioGRID-ORCS" id="209512">
    <property type="hits" value="0 hits in 76 CRISPR screens"/>
</dbReference>
<dbReference type="PRO" id="PR:Q5QD17"/>
<dbReference type="Proteomes" id="UP000000589">
    <property type="component" value="Chromosome 10"/>
</dbReference>
<dbReference type="RNAct" id="Q5QD17">
    <property type="molecule type" value="protein"/>
</dbReference>
<dbReference type="Bgee" id="ENSMUSG00000059763">
    <property type="expression patterns" value="Expressed in mesodermal cell in embryo and 7 other cell types or tissues"/>
</dbReference>
<dbReference type="GO" id="GO:0005886">
    <property type="term" value="C:plasma membrane"/>
    <property type="evidence" value="ECO:0007669"/>
    <property type="project" value="UniProtKB-SubCell"/>
</dbReference>
<dbReference type="GO" id="GO:0001594">
    <property type="term" value="F:trace-amine receptor activity"/>
    <property type="evidence" value="ECO:0007669"/>
    <property type="project" value="InterPro"/>
</dbReference>
<dbReference type="CDD" id="cd15312">
    <property type="entry name" value="7tmA_TAAR2_3_4"/>
    <property type="match status" value="1"/>
</dbReference>
<dbReference type="FunFam" id="1.20.1070.10:FF:000030">
    <property type="entry name" value="trace amine-associated receptor 1"/>
    <property type="match status" value="1"/>
</dbReference>
<dbReference type="Gene3D" id="1.20.1070.10">
    <property type="entry name" value="Rhodopsin 7-helix transmembrane proteins"/>
    <property type="match status" value="1"/>
</dbReference>
<dbReference type="InterPro" id="IPR000276">
    <property type="entry name" value="GPCR_Rhodpsn"/>
</dbReference>
<dbReference type="InterPro" id="IPR017452">
    <property type="entry name" value="GPCR_Rhodpsn_7TM"/>
</dbReference>
<dbReference type="InterPro" id="IPR050569">
    <property type="entry name" value="TAAR"/>
</dbReference>
<dbReference type="InterPro" id="IPR009132">
    <property type="entry name" value="TAAR_fam"/>
</dbReference>
<dbReference type="PANTHER" id="PTHR24249">
    <property type="entry name" value="HISTAMINE RECEPTOR-RELATED G-PROTEIN COUPLED RECEPTOR"/>
    <property type="match status" value="1"/>
</dbReference>
<dbReference type="PANTHER" id="PTHR24249:SF413">
    <property type="entry name" value="TRACE AMINE-ASSOCIATED RECEPTOR 2"/>
    <property type="match status" value="1"/>
</dbReference>
<dbReference type="Pfam" id="PF00001">
    <property type="entry name" value="7tm_1"/>
    <property type="match status" value="1"/>
</dbReference>
<dbReference type="PRINTS" id="PR00237">
    <property type="entry name" value="GPCRRHODOPSN"/>
</dbReference>
<dbReference type="PRINTS" id="PR01830">
    <property type="entry name" value="TRACEAMINER"/>
</dbReference>
<dbReference type="SMART" id="SM01381">
    <property type="entry name" value="7TM_GPCR_Srsx"/>
    <property type="match status" value="1"/>
</dbReference>
<dbReference type="SUPFAM" id="SSF81321">
    <property type="entry name" value="Family A G protein-coupled receptor-like"/>
    <property type="match status" value="1"/>
</dbReference>
<dbReference type="PROSITE" id="PS00237">
    <property type="entry name" value="G_PROTEIN_RECEP_F1_1"/>
    <property type="match status" value="1"/>
</dbReference>
<dbReference type="PROSITE" id="PS50262">
    <property type="entry name" value="G_PROTEIN_RECEP_F1_2"/>
    <property type="match status" value="1"/>
</dbReference>
<comment type="function">
    <text evidence="1 6">Orphan olfactory receptor specific for trace amines (By similarity). Trace amine compounds are enriched in animal body fluids and act on trace amine-associated receptors (TAARs) to elicit both intraspecific and interspecific innate behaviors (By similarity). Ligand-binding causes a conformation change that triggers signaling via the G(s)-class of G-proteins which activate adenylate cyclase (By similarity). May also be required to provide olfactory input into limbic brain areas to regulate emotional behaviors likely via modulation of the dopamine system (PubMed:35431833).</text>
</comment>
<comment type="subcellular location">
    <subcellularLocation>
        <location evidence="1">Cell membrane</location>
        <topology evidence="2">Multi-pass membrane protein</topology>
    </subcellularLocation>
</comment>
<comment type="tissue specificity">
    <text evidence="4 6">Mainly expressed in neurons of the olfactory epithelium (PubMed:16878137, PubMed:35431833). Also present in the limbic brain areas receiving projection from the olfactory system and several brain regions, including the hippocampus, cerebellum, cortex, raphe nuclei, hypothalamus and habenula (PubMed:35431833).</text>
</comment>
<comment type="domain">
    <text evidence="1">In addition to the well known disulfide bond common to G-protein coupled receptor 1 family, trace amine-associated receptors (TAARs) contain an unique disulfide bond (Cys-21-Cys-185) connecting the N-terminus to the extracellular Loop 2 (ECL2), which is required for agonist-induced receptor activation.</text>
</comment>
<comment type="disruption phenotype">
    <text evidence="5 6">Mice display increased locomotor activity and less immobility (PubMed:35431833). Mice show elevated tissue dopamine levels in the striatum and an increased dopaminergic neuron number in the Substantia Nigra (PubMed:35431833). They also show an increased neuroblast-like and proliferating cell number in the subventricular and subgranular zone, indicating increased adult neurogenesis (PubMed:35431833). Mice lacking Taar2, Taar3, Taar4, Taar5, Taar6, Taar7a, Taar7b, Taar7d, Taar7e, Taar7f, Taar8a, Taar8b, Taar8c and Taar9 show no visible phenotype or behavioral deficits (PubMed:23624375). They however show an absence of aversion to low concentrations of amines such as 2-phenylethylamine, isopentylamine, N-methylpiperidine and cadaverine (PubMed:23624375).</text>
</comment>
<comment type="similarity">
    <text evidence="3">Belongs to the G-protein coupled receptor 1 family.</text>
</comment>
<proteinExistence type="evidence at transcript level"/>
<keyword id="KW-1003">Cell membrane</keyword>
<keyword id="KW-1015">Disulfide bond</keyword>
<keyword id="KW-0297">G-protein coupled receptor</keyword>
<keyword id="KW-0325">Glycoprotein</keyword>
<keyword id="KW-0472">Membrane</keyword>
<keyword id="KW-0675">Receptor</keyword>
<keyword id="KW-1185">Reference proteome</keyword>
<keyword id="KW-0807">Transducer</keyword>
<keyword id="KW-0812">Transmembrane</keyword>
<keyword id="KW-1133">Transmembrane helix</keyword>
<sequence>MASFEAQQETFDCSEYGNGSCPENERSLGVRAAMYSLMACAIFITIFGNLAMIISISYFKQLHTPTNLLILSMAVTDFLLGFTIMPYSMVRSVENCWYFGLTFCKIHYSFDLMLSITSIFHLCSVAVDRFYAICHPLHYCTKMTIPVVRRLLLVCWSVPGAFAFGVVFSEAYADGIEGYDILVACSSSCPVMFNKLWGTTLFVAGFFTPSSMMVGIYGKIFAVSKKHARVIDNLPENQNNQMRKDKKAAKTLGIVMGVFLLCWFPCFFTILLDPFLNFSTPAVLFDALTWFGYFNSTCNPLIYGFFYPWFRRALKYILLGKIFSSHFHNTNLFTQKETE</sequence>
<reference key="1">
    <citation type="journal article" date="2005" name="Genomics">
        <title>Trace amine-associated receptors form structurally and functionally distinct subfamilies of novel G protein-coupled receptors.</title>
        <authorList>
            <person name="Lindemann L."/>
            <person name="Ebeling M."/>
            <person name="Kratochwil N.A."/>
            <person name="Bunzow J.R."/>
            <person name="Grandy D.K."/>
            <person name="Hoener M.C."/>
        </authorList>
    </citation>
    <scope>NUCLEOTIDE SEQUENCE [MRNA]</scope>
    <source>
        <strain>C57BL/6J</strain>
    </source>
</reference>
<reference key="2">
    <citation type="journal article" date="2004" name="Genome Res.">
        <title>The status, quality, and expansion of the NIH full-length cDNA project: the Mammalian Gene Collection (MGC).</title>
        <authorList>
            <consortium name="The MGC Project Team"/>
        </authorList>
    </citation>
    <scope>NUCLEOTIDE SEQUENCE [LARGE SCALE MRNA]</scope>
    <source>
        <tissue>Brain</tissue>
    </source>
</reference>
<reference key="3">
    <citation type="journal article" date="2003" name="Proc. Natl. Acad. Sci. U.S.A.">
        <title>The G protein-coupled receptor repertoires of human and mouse.</title>
        <authorList>
            <person name="Vassilatis D.K."/>
            <person name="Hohmann J.G."/>
            <person name="Zeng H."/>
            <person name="Li F."/>
            <person name="Ranchalis J.E."/>
            <person name="Mortrud M.T."/>
            <person name="Brown A."/>
            <person name="Rodriguez S.S."/>
            <person name="Weller J.R."/>
            <person name="Wright A.C."/>
            <person name="Bergmann J.E."/>
            <person name="Gaitanaris G.A."/>
        </authorList>
    </citation>
    <scope>NUCLEOTIDE SEQUENCE [LARGE SCALE MRNA] OF 169-313</scope>
</reference>
<reference key="4">
    <citation type="journal article" date="2006" name="Nature">
        <title>A second class of chemosensory receptors in the olfactory epithelium.</title>
        <authorList>
            <person name="Liberles S.D."/>
            <person name="Buck L.B."/>
        </authorList>
    </citation>
    <scope>TISSUE SPECIFICITY</scope>
</reference>
<reference key="5">
    <citation type="journal article" date="2013" name="Nature">
        <title>Non-redundant coding of aversive odours in the main olfactory pathway.</title>
        <authorList>
            <person name="Dewan A."/>
            <person name="Pacifico R."/>
            <person name="Zhan R."/>
            <person name="Rinberg D."/>
            <person name="Bozza T."/>
        </authorList>
    </citation>
    <scope>DISRUPTION PHENOTYPE</scope>
</reference>
<reference key="6">
    <citation type="journal article" date="2022" name="Front. Behav. Neurosci.">
        <title>Trace amine-associated receptor 2 is expressed in the limbic brain areas and is involved in dopamine regulation and adult neurogenesis.</title>
        <authorList>
            <person name="Efimova E.V."/>
            <person name="Kuvarzin S.R."/>
            <person name="Mor M.S."/>
            <person name="Katolikova N.V."/>
            <person name="Shemiakova T.S."/>
            <person name="Razenkova V."/>
            <person name="Ptukha M."/>
            <person name="Kozlova A.A."/>
            <person name="Murtazina R.Z."/>
            <person name="Smirnova D."/>
            <person name="Veshchitskii A.A."/>
            <person name="Merkulyeva N.S."/>
            <person name="Volnova A.B."/>
            <person name="Musienko P.E."/>
            <person name="Korzhevskii D.E."/>
            <person name="Budygin E.A."/>
            <person name="Gainetdinov R.R."/>
        </authorList>
    </citation>
    <scope>FUNCTION</scope>
    <scope>TISSUE SPECIFICITY</scope>
    <scope>DISRUPTION PHENOTYPE</scope>
</reference>
<organism>
    <name type="scientific">Mus musculus</name>
    <name type="common">Mouse</name>
    <dbReference type="NCBI Taxonomy" id="10090"/>
    <lineage>
        <taxon>Eukaryota</taxon>
        <taxon>Metazoa</taxon>
        <taxon>Chordata</taxon>
        <taxon>Craniata</taxon>
        <taxon>Vertebrata</taxon>
        <taxon>Euteleostomi</taxon>
        <taxon>Mammalia</taxon>
        <taxon>Eutheria</taxon>
        <taxon>Euarchontoglires</taxon>
        <taxon>Glires</taxon>
        <taxon>Rodentia</taxon>
        <taxon>Myomorpha</taxon>
        <taxon>Muroidea</taxon>
        <taxon>Muridae</taxon>
        <taxon>Murinae</taxon>
        <taxon>Mus</taxon>
        <taxon>Mus</taxon>
    </lineage>
</organism>
<accession>Q5QD17</accession>
<accession>A6H6B2</accession>
<accession>Q80T53</accession>